<proteinExistence type="inferred from homology"/>
<keyword id="KW-0963">Cytoplasm</keyword>
<keyword id="KW-0460">Magnesium</keyword>
<keyword id="KW-0479">Metal-binding</keyword>
<keyword id="KW-0548">Nucleotidyltransferase</keyword>
<keyword id="KW-0694">RNA-binding</keyword>
<keyword id="KW-0808">Transferase</keyword>
<accession>A8L6G1</accession>
<name>PNP_PARS2</name>
<organism>
    <name type="scientific">Parafrankia sp. (strain EAN1pec)</name>
    <dbReference type="NCBI Taxonomy" id="298653"/>
    <lineage>
        <taxon>Bacteria</taxon>
        <taxon>Bacillati</taxon>
        <taxon>Actinomycetota</taxon>
        <taxon>Actinomycetes</taxon>
        <taxon>Frankiales</taxon>
        <taxon>Frankiaceae</taxon>
        <taxon>Parafrankia</taxon>
    </lineage>
</organism>
<protein>
    <recommendedName>
        <fullName evidence="1">Polyribonucleotide nucleotidyltransferase</fullName>
        <ecNumber evidence="1">2.7.7.8</ecNumber>
    </recommendedName>
    <alternativeName>
        <fullName evidence="1">Polynucleotide phosphorylase</fullName>
        <shortName evidence="1">PNPase</shortName>
    </alternativeName>
</protein>
<reference key="1">
    <citation type="journal article" date="2007" name="Genome Res.">
        <title>Genome characteristics of facultatively symbiotic Frankia sp. strains reflect host range and host plant biogeography.</title>
        <authorList>
            <person name="Normand P."/>
            <person name="Lapierre P."/>
            <person name="Tisa L.S."/>
            <person name="Gogarten J.P."/>
            <person name="Alloisio N."/>
            <person name="Bagnarol E."/>
            <person name="Bassi C.A."/>
            <person name="Berry A.M."/>
            <person name="Bickhart D.M."/>
            <person name="Choisne N."/>
            <person name="Couloux A."/>
            <person name="Cournoyer B."/>
            <person name="Cruveiller S."/>
            <person name="Daubin V."/>
            <person name="Demange N."/>
            <person name="Francino M.P."/>
            <person name="Goltsman E."/>
            <person name="Huang Y."/>
            <person name="Kopp O.R."/>
            <person name="Labarre L."/>
            <person name="Lapidus A."/>
            <person name="Lavire C."/>
            <person name="Marechal J."/>
            <person name="Martinez M."/>
            <person name="Mastronunzio J.E."/>
            <person name="Mullin B.C."/>
            <person name="Niemann J."/>
            <person name="Pujic P."/>
            <person name="Rawnsley T."/>
            <person name="Rouy Z."/>
            <person name="Schenowitz C."/>
            <person name="Sellstedt A."/>
            <person name="Tavares F."/>
            <person name="Tomkins J.P."/>
            <person name="Vallenet D."/>
            <person name="Valverde C."/>
            <person name="Wall L.G."/>
            <person name="Wang Y."/>
            <person name="Medigue C."/>
            <person name="Benson D.R."/>
        </authorList>
    </citation>
    <scope>NUCLEOTIDE SEQUENCE [LARGE SCALE GENOMIC DNA]</scope>
    <source>
        <strain>EAN1pec</strain>
    </source>
</reference>
<gene>
    <name evidence="1" type="primary">pnp</name>
    <name type="ordered locus">Franean1_1189</name>
</gene>
<comment type="function">
    <text evidence="1">Involved in mRNA degradation. Catalyzes the phosphorolysis of single-stranded polyribonucleotides processively in the 3'- to 5'-direction.</text>
</comment>
<comment type="catalytic activity">
    <reaction evidence="1">
        <text>RNA(n+1) + phosphate = RNA(n) + a ribonucleoside 5'-diphosphate</text>
        <dbReference type="Rhea" id="RHEA:22096"/>
        <dbReference type="Rhea" id="RHEA-COMP:14527"/>
        <dbReference type="Rhea" id="RHEA-COMP:17342"/>
        <dbReference type="ChEBI" id="CHEBI:43474"/>
        <dbReference type="ChEBI" id="CHEBI:57930"/>
        <dbReference type="ChEBI" id="CHEBI:140395"/>
        <dbReference type="EC" id="2.7.7.8"/>
    </reaction>
</comment>
<comment type="cofactor">
    <cofactor evidence="1">
        <name>Mg(2+)</name>
        <dbReference type="ChEBI" id="CHEBI:18420"/>
    </cofactor>
</comment>
<comment type="subcellular location">
    <subcellularLocation>
        <location evidence="1">Cytoplasm</location>
    </subcellularLocation>
</comment>
<comment type="similarity">
    <text evidence="1">Belongs to the polyribonucleotide nucleotidyltransferase family.</text>
</comment>
<feature type="chain" id="PRO_1000147922" description="Polyribonucleotide nucleotidyltransferase">
    <location>
        <begin position="1"/>
        <end position="729"/>
    </location>
</feature>
<feature type="domain" description="KH" evidence="1">
    <location>
        <begin position="575"/>
        <end position="634"/>
    </location>
</feature>
<feature type="domain" description="S1 motif" evidence="1">
    <location>
        <begin position="646"/>
        <end position="718"/>
    </location>
</feature>
<feature type="region of interest" description="Disordered" evidence="2">
    <location>
        <begin position="399"/>
        <end position="419"/>
    </location>
</feature>
<feature type="binding site" evidence="1">
    <location>
        <position position="509"/>
    </location>
    <ligand>
        <name>Mg(2+)</name>
        <dbReference type="ChEBI" id="CHEBI:18420"/>
    </ligand>
</feature>
<feature type="binding site" evidence="1">
    <location>
        <position position="515"/>
    </location>
    <ligand>
        <name>Mg(2+)</name>
        <dbReference type="ChEBI" id="CHEBI:18420"/>
    </ligand>
</feature>
<evidence type="ECO:0000255" key="1">
    <source>
        <dbReference type="HAMAP-Rule" id="MF_01595"/>
    </source>
</evidence>
<evidence type="ECO:0000256" key="2">
    <source>
        <dbReference type="SAM" id="MobiDB-lite"/>
    </source>
</evidence>
<dbReference type="EC" id="2.7.7.8" evidence="1"/>
<dbReference type="EMBL" id="CP000820">
    <property type="protein sequence ID" value="ABW10643.1"/>
    <property type="molecule type" value="Genomic_DNA"/>
</dbReference>
<dbReference type="RefSeq" id="WP_020458819.1">
    <property type="nucleotide sequence ID" value="NC_009921.1"/>
</dbReference>
<dbReference type="SMR" id="A8L6G1"/>
<dbReference type="STRING" id="298653.Franean1_1189"/>
<dbReference type="KEGG" id="fre:Franean1_1189"/>
<dbReference type="eggNOG" id="COG1185">
    <property type="taxonomic scope" value="Bacteria"/>
</dbReference>
<dbReference type="HOGENOM" id="CLU_004217_2_2_11"/>
<dbReference type="GO" id="GO:0005829">
    <property type="term" value="C:cytosol"/>
    <property type="evidence" value="ECO:0007669"/>
    <property type="project" value="TreeGrafter"/>
</dbReference>
<dbReference type="GO" id="GO:0000175">
    <property type="term" value="F:3'-5'-RNA exonuclease activity"/>
    <property type="evidence" value="ECO:0007669"/>
    <property type="project" value="TreeGrafter"/>
</dbReference>
<dbReference type="GO" id="GO:0000287">
    <property type="term" value="F:magnesium ion binding"/>
    <property type="evidence" value="ECO:0007669"/>
    <property type="project" value="UniProtKB-UniRule"/>
</dbReference>
<dbReference type="GO" id="GO:0004654">
    <property type="term" value="F:polyribonucleotide nucleotidyltransferase activity"/>
    <property type="evidence" value="ECO:0007669"/>
    <property type="project" value="UniProtKB-UniRule"/>
</dbReference>
<dbReference type="GO" id="GO:0003723">
    <property type="term" value="F:RNA binding"/>
    <property type="evidence" value="ECO:0007669"/>
    <property type="project" value="UniProtKB-UniRule"/>
</dbReference>
<dbReference type="GO" id="GO:0006402">
    <property type="term" value="P:mRNA catabolic process"/>
    <property type="evidence" value="ECO:0007669"/>
    <property type="project" value="UniProtKB-UniRule"/>
</dbReference>
<dbReference type="GO" id="GO:0006396">
    <property type="term" value="P:RNA processing"/>
    <property type="evidence" value="ECO:0007669"/>
    <property type="project" value="InterPro"/>
</dbReference>
<dbReference type="CDD" id="cd02393">
    <property type="entry name" value="KH-I_PNPase"/>
    <property type="match status" value="1"/>
</dbReference>
<dbReference type="CDD" id="cd11364">
    <property type="entry name" value="RNase_PH_PNPase_2"/>
    <property type="match status" value="1"/>
</dbReference>
<dbReference type="CDD" id="cd04472">
    <property type="entry name" value="S1_PNPase"/>
    <property type="match status" value="1"/>
</dbReference>
<dbReference type="FunFam" id="2.40.50.140:FF:000069">
    <property type="entry name" value="Polyribonucleotide nucleotidyltransferase"/>
    <property type="match status" value="1"/>
</dbReference>
<dbReference type="FunFam" id="3.30.1370.10:FF:000001">
    <property type="entry name" value="Polyribonucleotide nucleotidyltransferase"/>
    <property type="match status" value="1"/>
</dbReference>
<dbReference type="FunFam" id="3.30.230.70:FF:000001">
    <property type="entry name" value="Polyribonucleotide nucleotidyltransferase"/>
    <property type="match status" value="1"/>
</dbReference>
<dbReference type="FunFam" id="3.30.230.70:FF:000002">
    <property type="entry name" value="Polyribonucleotide nucleotidyltransferase"/>
    <property type="match status" value="1"/>
</dbReference>
<dbReference type="Gene3D" id="3.30.230.70">
    <property type="entry name" value="GHMP Kinase, N-terminal domain"/>
    <property type="match status" value="2"/>
</dbReference>
<dbReference type="Gene3D" id="3.30.1370.10">
    <property type="entry name" value="K Homology domain, type 1"/>
    <property type="match status" value="1"/>
</dbReference>
<dbReference type="Gene3D" id="2.40.50.140">
    <property type="entry name" value="Nucleic acid-binding proteins"/>
    <property type="match status" value="1"/>
</dbReference>
<dbReference type="HAMAP" id="MF_01595">
    <property type="entry name" value="PNPase"/>
    <property type="match status" value="1"/>
</dbReference>
<dbReference type="InterPro" id="IPR001247">
    <property type="entry name" value="ExoRNase_PH_dom1"/>
</dbReference>
<dbReference type="InterPro" id="IPR036345">
    <property type="entry name" value="ExoRNase_PH_dom2_sf"/>
</dbReference>
<dbReference type="InterPro" id="IPR014069">
    <property type="entry name" value="GPSI/PNP"/>
</dbReference>
<dbReference type="InterPro" id="IPR004087">
    <property type="entry name" value="KH_dom"/>
</dbReference>
<dbReference type="InterPro" id="IPR004088">
    <property type="entry name" value="KH_dom_type_1"/>
</dbReference>
<dbReference type="InterPro" id="IPR036612">
    <property type="entry name" value="KH_dom_type_1_sf"/>
</dbReference>
<dbReference type="InterPro" id="IPR012340">
    <property type="entry name" value="NA-bd_OB-fold"/>
</dbReference>
<dbReference type="InterPro" id="IPR012162">
    <property type="entry name" value="PNPase"/>
</dbReference>
<dbReference type="InterPro" id="IPR027408">
    <property type="entry name" value="PNPase/RNase_PH_dom_sf"/>
</dbReference>
<dbReference type="InterPro" id="IPR015848">
    <property type="entry name" value="PNPase_PH_RNA-bd_bac/org-type"/>
</dbReference>
<dbReference type="InterPro" id="IPR036456">
    <property type="entry name" value="PNPase_PH_RNA-bd_sf"/>
</dbReference>
<dbReference type="InterPro" id="IPR020568">
    <property type="entry name" value="Ribosomal_Su5_D2-typ_SF"/>
</dbReference>
<dbReference type="InterPro" id="IPR003029">
    <property type="entry name" value="S1_domain"/>
</dbReference>
<dbReference type="NCBIfam" id="TIGR03591">
    <property type="entry name" value="polynuc_phos"/>
    <property type="match status" value="1"/>
</dbReference>
<dbReference type="NCBIfam" id="TIGR02696">
    <property type="entry name" value="pppGpp_PNP"/>
    <property type="match status" value="1"/>
</dbReference>
<dbReference type="NCBIfam" id="NF008805">
    <property type="entry name" value="PRK11824.1"/>
    <property type="match status" value="1"/>
</dbReference>
<dbReference type="PANTHER" id="PTHR11252">
    <property type="entry name" value="POLYRIBONUCLEOTIDE NUCLEOTIDYLTRANSFERASE"/>
    <property type="match status" value="1"/>
</dbReference>
<dbReference type="PANTHER" id="PTHR11252:SF0">
    <property type="entry name" value="POLYRIBONUCLEOTIDE NUCLEOTIDYLTRANSFERASE 1, MITOCHONDRIAL"/>
    <property type="match status" value="1"/>
</dbReference>
<dbReference type="Pfam" id="PF00013">
    <property type="entry name" value="KH_1"/>
    <property type="match status" value="1"/>
</dbReference>
<dbReference type="Pfam" id="PF03726">
    <property type="entry name" value="PNPase"/>
    <property type="match status" value="1"/>
</dbReference>
<dbReference type="Pfam" id="PF01138">
    <property type="entry name" value="RNase_PH"/>
    <property type="match status" value="2"/>
</dbReference>
<dbReference type="Pfam" id="PF00575">
    <property type="entry name" value="S1"/>
    <property type="match status" value="1"/>
</dbReference>
<dbReference type="PIRSF" id="PIRSF005499">
    <property type="entry name" value="PNPase"/>
    <property type="match status" value="1"/>
</dbReference>
<dbReference type="SMART" id="SM00322">
    <property type="entry name" value="KH"/>
    <property type="match status" value="1"/>
</dbReference>
<dbReference type="SMART" id="SM00316">
    <property type="entry name" value="S1"/>
    <property type="match status" value="1"/>
</dbReference>
<dbReference type="SUPFAM" id="SSF54791">
    <property type="entry name" value="Eukaryotic type KH-domain (KH-domain type I)"/>
    <property type="match status" value="1"/>
</dbReference>
<dbReference type="SUPFAM" id="SSF50249">
    <property type="entry name" value="Nucleic acid-binding proteins"/>
    <property type="match status" value="1"/>
</dbReference>
<dbReference type="SUPFAM" id="SSF46915">
    <property type="entry name" value="Polynucleotide phosphorylase/guanosine pentaphosphate synthase (PNPase/GPSI), domain 3"/>
    <property type="match status" value="1"/>
</dbReference>
<dbReference type="SUPFAM" id="SSF55666">
    <property type="entry name" value="Ribonuclease PH domain 2-like"/>
    <property type="match status" value="2"/>
</dbReference>
<dbReference type="SUPFAM" id="SSF54211">
    <property type="entry name" value="Ribosomal protein S5 domain 2-like"/>
    <property type="match status" value="2"/>
</dbReference>
<dbReference type="PROSITE" id="PS50084">
    <property type="entry name" value="KH_TYPE_1"/>
    <property type="match status" value="1"/>
</dbReference>
<dbReference type="PROSITE" id="PS50126">
    <property type="entry name" value="S1"/>
    <property type="match status" value="1"/>
</dbReference>
<sequence>MDDSTQAAEAVITTPTGARTVRFETGRLARQAAGAVVAHLGDTMVLSATTVSRSPKEQLDFFPLTVDVEERMYAAGRIPGSFFRREGRPSEDAILTCRLIDRPLRPSFAKGLRNEIQVVATVLALDPDTLYDVVAINAASASTMLAGLPFSGPIGATRVGYVDGDWIAFPTHSELERATFDMVVAGRVLEDGSDVAIMMVEAEATPGTVALVAGGAPAPTEEVVAAGLEAAKPAIRELCRAQSELAAGAAKPQREFPLFIDYHDDVLETLTAAVGEELAAALRIAGKAERETELERVRALAVEKVSGQFEGRDKEISPAYRALTKKLVRSRIVTDGVRIDGRSTTEIRELSAEVDYIPRVHGSALFERGETQILGVTTLAMLRMEQTVDTLNPDRTKRYMHNYNFPPYSTGETGRVGSPKRREIGHGALAERALLPVLPSREEFPYAIRQVSEALSSNGSTSMGSVCASTLSLLNAGVPLKAPVAGIAMGLIREGDAFVTLTDILGAEDAYGDMDFKVAGTQEFVTALQLDTKLDGIPASVLAGALQQARAARLTILEVMAEAIGGPDEMSAHAPRVISVKIPVDKIGEVIGPKGKMINQIQADSGAEITVEDDGTIYIGAADGPAAETARSAINAIANPQMPEVGERYLGTIVKITNFGAFVSLTPGKDGLLHVSKLKQLAGGKRVEKVEDVLSVGQKLQVEITEIDARGKISLAPGAESIDTVSAGS</sequence>